<feature type="chain" id="PRO_0000193204" description="Long-chain fatty acid transport protein 2">
    <location>
        <begin position="1"/>
        <end position="620"/>
    </location>
</feature>
<feature type="topological domain" description="Lumenal" evidence="23">
    <location>
        <begin position="1"/>
        <end position="4"/>
    </location>
</feature>
<feature type="transmembrane region" description="Helical" evidence="2">
    <location>
        <begin position="5"/>
        <end position="27"/>
    </location>
</feature>
<feature type="topological domain" description="Cytoplasmic" evidence="23">
    <location>
        <begin position="28"/>
        <end position="106"/>
    </location>
</feature>
<feature type="transmembrane region" description="Helical" evidence="2">
    <location>
        <begin position="107"/>
        <end position="127"/>
    </location>
</feature>
<feature type="topological domain" description="Lumenal" evidence="23">
    <location>
        <begin position="128"/>
        <end position="261"/>
    </location>
</feature>
<feature type="transmembrane region" description="Helical" evidence="2">
    <location>
        <begin position="262"/>
        <end position="282"/>
    </location>
</feature>
<feature type="topological domain" description="Cytoplasmic" evidence="23">
    <location>
        <begin position="283"/>
        <end position="620"/>
    </location>
</feature>
<feature type="binding site" evidence="2">
    <location>
        <begin position="222"/>
        <end position="233"/>
    </location>
    <ligand>
        <name>AMP</name>
        <dbReference type="ChEBI" id="CHEBI:456215"/>
    </ligand>
</feature>
<feature type="modified residue" description="N6-acetyllysine" evidence="1">
    <location>
        <position position="291"/>
    </location>
</feature>
<feature type="modified residue" description="Phosphothreonine" evidence="28 29">
    <location>
        <position position="577"/>
    </location>
</feature>
<feature type="splice variant" id="VSP_042726" description="In isoform 2." evidence="17">
    <location>
        <begin position="230"/>
        <end position="282"/>
    </location>
</feature>
<feature type="sequence variant" id="VAR_046533" description="In dbSNP:rs1648348." evidence="3 7 12 13">
    <original>K</original>
    <variation>Q</variation>
    <location>
        <position position="48"/>
    </location>
</feature>
<sequence>MLSAIYTVLAGLLFLPLLVNLCCPYFFQDIGYFLKVAAVGRRVRSYGKRRPARTILRAFLEKARQTPHKPFLLFRDETLTYAQVDRRSNQVARALHDHLGLRQGDCVALLMGNEPAYVWLWLGLVKLGCAMACLNYNIRAKSLLHCFQCCGAKVLLVSPELQAAVEEILPSLKKDDVSIYYVSRTSNTDGIDSFLDKVDEVSTEPIPESWRSEVTFSTPALYIYTSGTTGLPKAAMITHQRIWYGTGLTFVSGLKADDVIYITLPFYHSAALLIGIHGCIVAGATLALRTKFSASQFWDDCRKYNVTVIQYIGELLRYLCNSPQKPNDRDHKVRLALGNGLRGDVWRQFVKRFGDICIYEFYAATEGNIGFMNYARKVGAVGRVNYLQKKIITYDLIKYDVEKDEPVRDENGYCVRVPKGEVGLLVCKITQLTPFNGYAGAKAQTEKKKLRDVFKKGDLYFNSGDLLMVDHENFIYFHDRVGDTFRWKGENVATTEVADTVGLVDFVQEVNVYGVHVPDHEGRIGMASIKMKENHEFDGKKLFQHIADYLPSYARPRFLRIQDTIEITGTFKHRKMTLVEEGFNPAVIKDALYFLDDTAKMYVPMTEDIYNAISAKTLKL</sequence>
<protein>
    <recommendedName>
        <fullName evidence="20">Long-chain fatty acid transport protein 2</fullName>
    </recommendedName>
    <alternativeName>
        <fullName>Arachidonate--CoA ligase</fullName>
        <ecNumber evidence="1">6.2.1.15</ecNumber>
    </alternativeName>
    <alternativeName>
        <fullName evidence="18">Fatty acid transport protein 2</fullName>
        <shortName evidence="18">FATP-2</shortName>
    </alternativeName>
    <alternativeName>
        <fullName>Fatty-acid-coenzyme A ligase, very long-chain 1</fullName>
    </alternativeName>
    <alternativeName>
        <fullName>Long-chain-fatty-acid--CoA ligase</fullName>
        <ecNumber evidence="3 5 6">6.2.1.3</ecNumber>
    </alternativeName>
    <alternativeName>
        <fullName>Phytanate--CoA ligase</fullName>
        <ecNumber evidence="3">6.2.1.24</ecNumber>
    </alternativeName>
    <alternativeName>
        <fullName>Solute carrier family 27 member 2</fullName>
    </alternativeName>
    <alternativeName>
        <fullName>THCA-CoA ligase</fullName>
        <ecNumber evidence="6">6.2.1.7</ecNumber>
    </alternativeName>
    <alternativeName>
        <fullName evidence="14 15 16">Very long-chain acyl-CoA synthetase</fullName>
        <shortName evidence="18">VLACS</shortName>
        <shortName evidence="14 15 16">VLCS</shortName>
        <ecNumber evidence="3 5 6 9">6.2.1.-</ecNumber>
    </alternativeName>
    <alternativeName>
        <fullName>Very long-chain-fatty-acid-CoA ligase</fullName>
    </alternativeName>
</protein>
<reference key="1">
    <citation type="submission" date="1997-12" db="EMBL/GenBank/DDBJ databases">
        <title>Molecular cloning of a possible human homolog of the rat very-long-chain acyl-CoA synthetase cDNA and its chromosomal localization.</title>
        <authorList>
            <person name="Uchiyama A."/>
            <person name="Aoyama T."/>
            <person name="Kamijo K."/>
            <person name="Wakui K."/>
            <person name="Fukushima Y."/>
            <person name="Shimozawa N."/>
            <person name="Suzuki Y."/>
            <person name="Kondo N."/>
            <person name="Orii T."/>
            <person name="Hashimoto T."/>
        </authorList>
    </citation>
    <scope>NUCLEOTIDE SEQUENCE [MRNA] (ISOFORM 1)</scope>
    <scope>VARIANT GLN-48</scope>
    <source>
        <tissue>Liver</tissue>
    </source>
</reference>
<reference key="2">
    <citation type="journal article" date="1999" name="Biochem. Biophys. Res. Commun.">
        <title>Human very-long-chain acyl-CoA synthetase: cloning, topography, and relevance to branched-chain fatty acid metabolism.</title>
        <authorList>
            <person name="Steinberg S.J."/>
            <person name="Wang S.J."/>
            <person name="Kim D.G."/>
            <person name="Mihalik S.J."/>
            <person name="Watkins P.A."/>
        </authorList>
    </citation>
    <scope>NUCLEOTIDE SEQUENCE [MRNA] (ISOFORM 1)</scope>
    <scope>TISSUE SPECIFICITY</scope>
    <scope>SUBCELLULAR LOCATION</scope>
    <scope>FUNCTION</scope>
    <scope>CATALYTIC ACTIVITY</scope>
    <scope>VARIANT GLN-48</scope>
</reference>
<reference key="3">
    <citation type="journal article" date="2004" name="Nat. Genet.">
        <title>Complete sequencing and characterization of 21,243 full-length human cDNAs.</title>
        <authorList>
            <person name="Ota T."/>
            <person name="Suzuki Y."/>
            <person name="Nishikawa T."/>
            <person name="Otsuki T."/>
            <person name="Sugiyama T."/>
            <person name="Irie R."/>
            <person name="Wakamatsu A."/>
            <person name="Hayashi K."/>
            <person name="Sato H."/>
            <person name="Nagai K."/>
            <person name="Kimura K."/>
            <person name="Makita H."/>
            <person name="Sekine M."/>
            <person name="Obayashi M."/>
            <person name="Nishi T."/>
            <person name="Shibahara T."/>
            <person name="Tanaka T."/>
            <person name="Ishii S."/>
            <person name="Yamamoto J."/>
            <person name="Saito K."/>
            <person name="Kawai Y."/>
            <person name="Isono Y."/>
            <person name="Nakamura Y."/>
            <person name="Nagahari K."/>
            <person name="Murakami K."/>
            <person name="Yasuda T."/>
            <person name="Iwayanagi T."/>
            <person name="Wagatsuma M."/>
            <person name="Shiratori A."/>
            <person name="Sudo H."/>
            <person name="Hosoiri T."/>
            <person name="Kaku Y."/>
            <person name="Kodaira H."/>
            <person name="Kondo H."/>
            <person name="Sugawara M."/>
            <person name="Takahashi M."/>
            <person name="Kanda K."/>
            <person name="Yokoi T."/>
            <person name="Furuya T."/>
            <person name="Kikkawa E."/>
            <person name="Omura Y."/>
            <person name="Abe K."/>
            <person name="Kamihara K."/>
            <person name="Katsuta N."/>
            <person name="Sato K."/>
            <person name="Tanikawa M."/>
            <person name="Yamazaki M."/>
            <person name="Ninomiya K."/>
            <person name="Ishibashi T."/>
            <person name="Yamashita H."/>
            <person name="Murakawa K."/>
            <person name="Fujimori K."/>
            <person name="Tanai H."/>
            <person name="Kimata M."/>
            <person name="Watanabe M."/>
            <person name="Hiraoka S."/>
            <person name="Chiba Y."/>
            <person name="Ishida S."/>
            <person name="Ono Y."/>
            <person name="Takiguchi S."/>
            <person name="Watanabe S."/>
            <person name="Yosida M."/>
            <person name="Hotuta T."/>
            <person name="Kusano J."/>
            <person name="Kanehori K."/>
            <person name="Takahashi-Fujii A."/>
            <person name="Hara H."/>
            <person name="Tanase T.-O."/>
            <person name="Nomura Y."/>
            <person name="Togiya S."/>
            <person name="Komai F."/>
            <person name="Hara R."/>
            <person name="Takeuchi K."/>
            <person name="Arita M."/>
            <person name="Imose N."/>
            <person name="Musashino K."/>
            <person name="Yuuki H."/>
            <person name="Oshima A."/>
            <person name="Sasaki N."/>
            <person name="Aotsuka S."/>
            <person name="Yoshikawa Y."/>
            <person name="Matsunawa H."/>
            <person name="Ichihara T."/>
            <person name="Shiohata N."/>
            <person name="Sano S."/>
            <person name="Moriya S."/>
            <person name="Momiyama H."/>
            <person name="Satoh N."/>
            <person name="Takami S."/>
            <person name="Terashima Y."/>
            <person name="Suzuki O."/>
            <person name="Nakagawa S."/>
            <person name="Senoh A."/>
            <person name="Mizoguchi H."/>
            <person name="Goto Y."/>
            <person name="Shimizu F."/>
            <person name="Wakebe H."/>
            <person name="Hishigaki H."/>
            <person name="Watanabe T."/>
            <person name="Sugiyama A."/>
            <person name="Takemoto M."/>
            <person name="Kawakami B."/>
            <person name="Yamazaki M."/>
            <person name="Watanabe K."/>
            <person name="Kumagai A."/>
            <person name="Itakura S."/>
            <person name="Fukuzumi Y."/>
            <person name="Fujimori Y."/>
            <person name="Komiyama M."/>
            <person name="Tashiro H."/>
            <person name="Tanigami A."/>
            <person name="Fujiwara T."/>
            <person name="Ono T."/>
            <person name="Yamada K."/>
            <person name="Fujii Y."/>
            <person name="Ozaki K."/>
            <person name="Hirao M."/>
            <person name="Ohmori Y."/>
            <person name="Kawabata A."/>
            <person name="Hikiji T."/>
            <person name="Kobatake N."/>
            <person name="Inagaki H."/>
            <person name="Ikema Y."/>
            <person name="Okamoto S."/>
            <person name="Okitani R."/>
            <person name="Kawakami T."/>
            <person name="Noguchi S."/>
            <person name="Itoh T."/>
            <person name="Shigeta K."/>
            <person name="Senba T."/>
            <person name="Matsumura K."/>
            <person name="Nakajima Y."/>
            <person name="Mizuno T."/>
            <person name="Morinaga M."/>
            <person name="Sasaki M."/>
            <person name="Togashi T."/>
            <person name="Oyama M."/>
            <person name="Hata H."/>
            <person name="Watanabe M."/>
            <person name="Komatsu T."/>
            <person name="Mizushima-Sugano J."/>
            <person name="Satoh T."/>
            <person name="Shirai Y."/>
            <person name="Takahashi Y."/>
            <person name="Nakagawa K."/>
            <person name="Okumura K."/>
            <person name="Nagase T."/>
            <person name="Nomura N."/>
            <person name="Kikuchi H."/>
            <person name="Masuho Y."/>
            <person name="Yamashita R."/>
            <person name="Nakai K."/>
            <person name="Yada T."/>
            <person name="Nakamura Y."/>
            <person name="Ohara O."/>
            <person name="Isogai T."/>
            <person name="Sugano S."/>
        </authorList>
    </citation>
    <scope>NUCLEOTIDE SEQUENCE [LARGE SCALE MRNA] (ISOFORM 1)</scope>
    <scope>VARIANT GLN-48</scope>
    <source>
        <tissue>Colon</tissue>
    </source>
</reference>
<reference key="4">
    <citation type="submission" date="2005-04" db="EMBL/GenBank/DDBJ databases">
        <authorList>
            <person name="Suzuki Y."/>
            <person name="Sugano S."/>
            <person name="Totoki Y."/>
            <person name="Toyoda A."/>
            <person name="Takeda T."/>
            <person name="Sakaki Y."/>
            <person name="Tanaka A."/>
            <person name="Yokoyama S."/>
        </authorList>
    </citation>
    <scope>NUCLEOTIDE SEQUENCE [LARGE SCALE MRNA] (ISOFORM 1)</scope>
    <source>
        <tissue>Kidney</tissue>
    </source>
</reference>
<reference key="5">
    <citation type="journal article" date="2006" name="Nature">
        <title>Analysis of the DNA sequence and duplication history of human chromosome 15.</title>
        <authorList>
            <person name="Zody M.C."/>
            <person name="Garber M."/>
            <person name="Sharpe T."/>
            <person name="Young S.K."/>
            <person name="Rowen L."/>
            <person name="O'Neill K."/>
            <person name="Whittaker C.A."/>
            <person name="Kamal M."/>
            <person name="Chang J.L."/>
            <person name="Cuomo C.A."/>
            <person name="Dewar K."/>
            <person name="FitzGerald M.G."/>
            <person name="Kodira C.D."/>
            <person name="Madan A."/>
            <person name="Qin S."/>
            <person name="Yang X."/>
            <person name="Abbasi N."/>
            <person name="Abouelleil A."/>
            <person name="Arachchi H.M."/>
            <person name="Baradarani L."/>
            <person name="Birditt B."/>
            <person name="Bloom S."/>
            <person name="Bloom T."/>
            <person name="Borowsky M.L."/>
            <person name="Burke J."/>
            <person name="Butler J."/>
            <person name="Cook A."/>
            <person name="DeArellano K."/>
            <person name="DeCaprio D."/>
            <person name="Dorris L. III"/>
            <person name="Dors M."/>
            <person name="Eichler E.E."/>
            <person name="Engels R."/>
            <person name="Fahey J."/>
            <person name="Fleetwood P."/>
            <person name="Friedman C."/>
            <person name="Gearin G."/>
            <person name="Hall J.L."/>
            <person name="Hensley G."/>
            <person name="Johnson E."/>
            <person name="Jones C."/>
            <person name="Kamat A."/>
            <person name="Kaur A."/>
            <person name="Locke D.P."/>
            <person name="Madan A."/>
            <person name="Munson G."/>
            <person name="Jaffe D.B."/>
            <person name="Lui A."/>
            <person name="Macdonald P."/>
            <person name="Mauceli E."/>
            <person name="Naylor J.W."/>
            <person name="Nesbitt R."/>
            <person name="Nicol R."/>
            <person name="O'Leary S.B."/>
            <person name="Ratcliffe A."/>
            <person name="Rounsley S."/>
            <person name="She X."/>
            <person name="Sneddon K.M.B."/>
            <person name="Stewart S."/>
            <person name="Sougnez C."/>
            <person name="Stone S.M."/>
            <person name="Topham K."/>
            <person name="Vincent D."/>
            <person name="Wang S."/>
            <person name="Zimmer A.R."/>
            <person name="Birren B.W."/>
            <person name="Hood L."/>
            <person name="Lander E.S."/>
            <person name="Nusbaum C."/>
        </authorList>
    </citation>
    <scope>NUCLEOTIDE SEQUENCE [LARGE SCALE GENOMIC DNA]</scope>
</reference>
<reference key="6">
    <citation type="submission" date="2005-07" db="EMBL/GenBank/DDBJ databases">
        <authorList>
            <person name="Mural R.J."/>
            <person name="Istrail S."/>
            <person name="Sutton G.G."/>
            <person name="Florea L."/>
            <person name="Halpern A.L."/>
            <person name="Mobarry C.M."/>
            <person name="Lippert R."/>
            <person name="Walenz B."/>
            <person name="Shatkay H."/>
            <person name="Dew I."/>
            <person name="Miller J.R."/>
            <person name="Flanigan M.J."/>
            <person name="Edwards N.J."/>
            <person name="Bolanos R."/>
            <person name="Fasulo D."/>
            <person name="Halldorsson B.V."/>
            <person name="Hannenhalli S."/>
            <person name="Turner R."/>
            <person name="Yooseph S."/>
            <person name="Lu F."/>
            <person name="Nusskern D.R."/>
            <person name="Shue B.C."/>
            <person name="Zheng X.H."/>
            <person name="Zhong F."/>
            <person name="Delcher A.L."/>
            <person name="Huson D.H."/>
            <person name="Kravitz S.A."/>
            <person name="Mouchard L."/>
            <person name="Reinert K."/>
            <person name="Remington K.A."/>
            <person name="Clark A.G."/>
            <person name="Waterman M.S."/>
            <person name="Eichler E.E."/>
            <person name="Adams M.D."/>
            <person name="Hunkapiller M.W."/>
            <person name="Myers E.W."/>
            <person name="Venter J.C."/>
        </authorList>
    </citation>
    <scope>NUCLEOTIDE SEQUENCE [LARGE SCALE GENOMIC DNA]</scope>
    <scope>VARIANT GLN-48</scope>
</reference>
<reference key="7">
    <citation type="journal article" date="2004" name="Genome Res.">
        <title>The status, quality, and expansion of the NIH full-length cDNA project: the Mammalian Gene Collection (MGC).</title>
        <authorList>
            <consortium name="The MGC Project Team"/>
        </authorList>
    </citation>
    <scope>NUCLEOTIDE SEQUENCE [LARGE SCALE MRNA] (ISOFORM 2)</scope>
    <source>
        <tissue>Placenta</tissue>
    </source>
</reference>
<reference key="8">
    <citation type="journal article" date="2000" name="Exp. Cell Res.">
        <title>Intraperoxisomal localization of very-long-chain fatty acyl-CoA synthetase: implication in X-adrenoleukodystrophy.</title>
        <authorList>
            <person name="Smith B.T."/>
            <person name="Sengupta T.K."/>
            <person name="Singh I."/>
        </authorList>
    </citation>
    <scope>SUBCELLULAR LOCATION</scope>
    <scope>TOPOLOGY</scope>
</reference>
<reference key="9">
    <citation type="journal article" date="2000" name="J. Biol. Chem.">
        <title>The human liver-specific homolog of very long-chain acyl-CoA synthetase is cholate:CoA ligase.</title>
        <authorList>
            <person name="Steinberg S.J."/>
            <person name="Mihalik S.J."/>
            <person name="Kim D.G."/>
            <person name="Cuebas D.A."/>
            <person name="Watkins P.A."/>
        </authorList>
    </citation>
    <scope>FUNCTION</scope>
    <scope>CATALYTIC ACTIVITY</scope>
</reference>
<reference key="10">
    <citation type="journal article" date="2002" name="J. Biol. Chem.">
        <title>Participation of two members of the very long-chain acyl-CoA synthetase family in bile acid synthesis and recycling.</title>
        <authorList>
            <person name="Mihalik S.J."/>
            <person name="Steinberg S.J."/>
            <person name="Pei Z."/>
            <person name="Park J."/>
            <person name="Kim do G."/>
            <person name="Heinzer A.K."/>
            <person name="Dacremont G."/>
            <person name="Wanders R.J."/>
            <person name="Cuebas D.A."/>
            <person name="Smith K.D."/>
            <person name="Watkins P.A."/>
        </authorList>
    </citation>
    <scope>FUNCTION</scope>
    <scope>CATALYTIC ACTIVITY</scope>
    <scope>SUBCELLULAR LOCATION</scope>
    <scope>TOPOLOGY</scope>
    <scope>BIOPHYSICOCHEMICAL PROPERTIES</scope>
</reference>
<reference key="11">
    <citation type="journal article" date="2008" name="Proc. Natl. Acad. Sci. U.S.A.">
        <title>A quantitative atlas of mitotic phosphorylation.</title>
        <authorList>
            <person name="Dephoure N."/>
            <person name="Zhou C."/>
            <person name="Villen J."/>
            <person name="Beausoleil S.A."/>
            <person name="Bakalarski C.E."/>
            <person name="Elledge S.J."/>
            <person name="Gygi S.P."/>
        </authorList>
    </citation>
    <scope>IDENTIFICATION BY MASS SPECTROMETRY [LARGE SCALE ANALYSIS]</scope>
    <source>
        <tissue>Cervix carcinoma</tissue>
    </source>
</reference>
<reference key="12">
    <citation type="journal article" date="2010" name="Am. J. Physiol.">
        <title>FATP2 is a hepatic fatty acid transporter and peroxisomal very long-chain acyl-CoA synthetase.</title>
        <authorList>
            <person name="Falcon A."/>
            <person name="Doege H."/>
            <person name="Fluitt A."/>
            <person name="Tsang B."/>
            <person name="Watson N."/>
            <person name="Kay M.A."/>
            <person name="Stahl A."/>
        </authorList>
    </citation>
    <scope>FUNCTION</scope>
    <scope>CATALYTIC ACTIVITY</scope>
    <scope>TRANSPORT ACTIVITY</scope>
    <scope>TISSUE SPECIFICITY</scope>
    <scope>SUBCELLULAR LOCATION</scope>
</reference>
<reference key="13">
    <citation type="journal article" date="2010" name="Sci. Signal.">
        <title>Quantitative phosphoproteomics reveals widespread full phosphorylation site occupancy during mitosis.</title>
        <authorList>
            <person name="Olsen J.V."/>
            <person name="Vermeulen M."/>
            <person name="Santamaria A."/>
            <person name="Kumar C."/>
            <person name="Miller M.L."/>
            <person name="Jensen L.J."/>
            <person name="Gnad F."/>
            <person name="Cox J."/>
            <person name="Jensen T.S."/>
            <person name="Nigg E.A."/>
            <person name="Brunak S."/>
            <person name="Mann M."/>
        </authorList>
    </citation>
    <scope>PHOSPHORYLATION [LARGE SCALE ANALYSIS] AT THR-577</scope>
    <scope>IDENTIFICATION BY MASS SPECTROMETRY [LARGE SCALE ANALYSIS]</scope>
    <source>
        <tissue>Cervix carcinoma</tissue>
    </source>
</reference>
<reference key="14">
    <citation type="journal article" date="2011" name="Int. J. Med. Sci.">
        <title>Overexpression of CD36 and acyl-CoA synthetases FATP2, FATP4 and ACSL1 increases fatty acid uptake in human hepatoma cells.</title>
        <authorList>
            <person name="Krammer J."/>
            <person name="Digel M."/>
            <person name="Ehehalt F."/>
            <person name="Stremmel W."/>
            <person name="Fuellekrug J."/>
            <person name="Ehehalt R."/>
        </authorList>
    </citation>
    <scope>FUNCTION</scope>
    <scope>CATALYTIC ACTIVITY</scope>
    <scope>TRANSPORT ACTIVITY</scope>
    <scope>SUBCELLULAR LOCATION</scope>
</reference>
<reference key="15">
    <citation type="journal article" date="2011" name="BMC Syst. Biol.">
        <title>Initial characterization of the human central proteome.</title>
        <authorList>
            <person name="Burkard T.R."/>
            <person name="Planyavsky M."/>
            <person name="Kaupe I."/>
            <person name="Breitwieser F.P."/>
            <person name="Buerckstuemmer T."/>
            <person name="Bennett K.L."/>
            <person name="Superti-Furga G."/>
            <person name="Colinge J."/>
        </authorList>
    </citation>
    <scope>IDENTIFICATION BY MASS SPECTROMETRY [LARGE SCALE ANALYSIS]</scope>
</reference>
<reference key="16">
    <citation type="journal article" date="2011" name="J. Biol. Chem.">
        <title>Human fatty acid transport protein 2a/very long chain acyl-CoA synthetase 1 (FATP2a/Acsvl1) has a preference in mediating the channeling of exogenous n-3 fatty acids into phosphatidylinositol.</title>
        <authorList>
            <person name="Melton E.M."/>
            <person name="Cerny R.L."/>
            <person name="Watkins P.A."/>
            <person name="DiRusso C.C."/>
            <person name="Black P.N."/>
        </authorList>
    </citation>
    <scope>FUNCTION (ISOFORMS 1 AND 2)</scope>
    <scope>CATALYTIC ACTIVITY (ISOFORMS 1 AND 2)</scope>
    <scope>TISSUE SPECIFICITY (ISOFORMS 1 AND 2)</scope>
    <scope>TRANSPORT ACTIVITY (ISOFORMS 1 AND 2)</scope>
</reference>
<reference key="17">
    <citation type="journal article" date="2013" name="Biochem. Biophys. Res. Commun.">
        <title>Identification of acyl-CoA synthetases involved in the mammalian sphingosine 1-phosphate metabolic pathway.</title>
        <authorList>
            <person name="Ohkuni A."/>
            <person name="Ohno Y."/>
            <person name="Kihara A."/>
        </authorList>
    </citation>
    <scope>CATALYTIC ACTIVITY</scope>
    <scope>SUBCELLULAR LOCATION</scope>
    <scope>TISSUE SPECIFICITY</scope>
</reference>
<reference key="18">
    <citation type="journal article" date="2013" name="J. Proteome Res.">
        <title>Toward a comprehensive characterization of a human cancer cell phosphoproteome.</title>
        <authorList>
            <person name="Zhou H."/>
            <person name="Di Palma S."/>
            <person name="Preisinger C."/>
            <person name="Peng M."/>
            <person name="Polat A.N."/>
            <person name="Heck A.J."/>
            <person name="Mohammed S."/>
        </authorList>
    </citation>
    <scope>PHOSPHORYLATION [LARGE SCALE ANALYSIS] AT THR-577</scope>
    <scope>IDENTIFICATION BY MASS SPECTROMETRY [LARGE SCALE ANALYSIS]</scope>
    <source>
        <tissue>Cervix carcinoma</tissue>
    </source>
</reference>
<reference key="19">
    <citation type="journal article" date="2014" name="J. Proteomics">
        <title>An enzyme assisted RP-RPLC approach for in-depth analysis of human liver phosphoproteome.</title>
        <authorList>
            <person name="Bian Y."/>
            <person name="Song C."/>
            <person name="Cheng K."/>
            <person name="Dong M."/>
            <person name="Wang F."/>
            <person name="Huang J."/>
            <person name="Sun D."/>
            <person name="Wang L."/>
            <person name="Ye M."/>
            <person name="Zou H."/>
        </authorList>
    </citation>
    <scope>IDENTIFICATION BY MASS SPECTROMETRY [LARGE SCALE ANALYSIS]</scope>
    <source>
        <tissue>Liver</tissue>
    </source>
</reference>
<organism>
    <name type="scientific">Homo sapiens</name>
    <name type="common">Human</name>
    <dbReference type="NCBI Taxonomy" id="9606"/>
    <lineage>
        <taxon>Eukaryota</taxon>
        <taxon>Metazoa</taxon>
        <taxon>Chordata</taxon>
        <taxon>Craniata</taxon>
        <taxon>Vertebrata</taxon>
        <taxon>Euteleostomi</taxon>
        <taxon>Mammalia</taxon>
        <taxon>Eutheria</taxon>
        <taxon>Euarchontoglires</taxon>
        <taxon>Primates</taxon>
        <taxon>Haplorrhini</taxon>
        <taxon>Catarrhini</taxon>
        <taxon>Hominidae</taxon>
        <taxon>Homo</taxon>
    </lineage>
</organism>
<evidence type="ECO:0000250" key="1">
    <source>
        <dbReference type="UniProtKB" id="O35488"/>
    </source>
</evidence>
<evidence type="ECO:0000255" key="2"/>
<evidence type="ECO:0000269" key="3">
    <source>
    </source>
</evidence>
<evidence type="ECO:0000269" key="4">
    <source>
    </source>
</evidence>
<evidence type="ECO:0000269" key="5">
    <source>
    </source>
</evidence>
<evidence type="ECO:0000269" key="6">
    <source>
    </source>
</evidence>
<evidence type="ECO:0000269" key="7">
    <source>
    </source>
</evidence>
<evidence type="ECO:0000269" key="8">
    <source>
    </source>
</evidence>
<evidence type="ECO:0000269" key="9">
    <source>
    </source>
</evidence>
<evidence type="ECO:0000269" key="10">
    <source>
    </source>
</evidence>
<evidence type="ECO:0000269" key="11">
    <source>
    </source>
</evidence>
<evidence type="ECO:0000269" key="12">
    <source ref="1"/>
</evidence>
<evidence type="ECO:0000269" key="13">
    <source ref="6"/>
</evidence>
<evidence type="ECO:0000303" key="14">
    <source>
    </source>
</evidence>
<evidence type="ECO:0000303" key="15">
    <source>
    </source>
</evidence>
<evidence type="ECO:0000303" key="16">
    <source>
    </source>
</evidence>
<evidence type="ECO:0000303" key="17">
    <source>
    </source>
</evidence>
<evidence type="ECO:0000303" key="18">
    <source>
    </source>
</evidence>
<evidence type="ECO:0000303" key="19">
    <source>
    </source>
</evidence>
<evidence type="ECO:0000305" key="20"/>
<evidence type="ECO:0000305" key="21">
    <source>
    </source>
</evidence>
<evidence type="ECO:0000305" key="22">
    <source>
    </source>
</evidence>
<evidence type="ECO:0000305" key="23">
    <source>
    </source>
</evidence>
<evidence type="ECO:0000305" key="24">
    <source>
    </source>
</evidence>
<evidence type="ECO:0000305" key="25">
    <source>
    </source>
</evidence>
<evidence type="ECO:0000305" key="26">
    <source>
    </source>
</evidence>
<evidence type="ECO:0000305" key="27">
    <source>
    </source>
</evidence>
<evidence type="ECO:0007744" key="28">
    <source>
    </source>
</evidence>
<evidence type="ECO:0007744" key="29">
    <source>
    </source>
</evidence>
<accession>O14975</accession>
<accession>A8K2J7</accession>
<accession>Q53FY6</accession>
<accession>Q6PF09</accession>
<proteinExistence type="evidence at protein level"/>
<comment type="function">
    <text evidence="3 5 6 8 10 11">Mediates the import of long-chain fatty acids (LCFA) into the cell by facilitating their transport across cell membranes, playing an important role in hepatic fatty acid uptake (PubMed:10198260, PubMed:10749848, PubMed:11980911, PubMed:20530735, PubMed:22022213, PubMed:24269233). Also functions as an acyl-CoA ligase catalyzing the ATP-dependent formation of fatty acyl-CoA using LCFA and very-long-chain fatty acids (VLCFA) as substrates, which prevents fatty acid efflux from cells and might drive more fatty acid uptake (PubMed:10198260, PubMed:10749848, PubMed:11980911, PubMed:20530735, PubMed:22022213, PubMed:24269233). Plays a pivotal role in regulating available LCFA substrates from exogenous sources in tissues undergoing high levels of beta-oxidation or triglyceride synthesis (PubMed:20530735). Can also activate branched-chain fatty acids such as phytanic acid and pristanic acid (PubMed:10198260). May contribute to the synthesis of sphingosine-1-phosphate (PubMed:24269233). Does not activate C24 bile acids, cholate and chenodeoxycholate (PubMed:11980911). In vitro, activates 3-alpha,7-alpha,12-alpha-trihydroxy-5-beta-cholestanate (THCA), the C27 precursor of cholic acid deriving from the de novo synthesis from cholesterol (PubMed:11980911). However, it is not critical for THCA activation and bile synthesis in vivo (PubMed:20530735).</text>
</comment>
<comment type="function">
    <molecule>Isoform 1</molecule>
    <text evidence="3 9">Exhibits both long-chain fatty acids (LCFA) transport activity and acyl CoA synthetase towards very long-chain fatty acids (PubMed:10198260, PubMed:21768100). Shows a preference for generating CoA derivatives of n-3 fatty acids, which are preferentially trafficked into phosphatidylinositol (PubMed:21768100).</text>
</comment>
<comment type="function">
    <molecule>Isoform 2</molecule>
    <text evidence="9">Exhibits long-chain fatty acids (LCFA) transport activity but lacks acyl CoA synthetase towards very long-chain fatty acids.</text>
</comment>
<comment type="catalytic activity">
    <molecule>Isoform 1</molecule>
    <reaction evidence="8 9 10">
        <text>a fatty acid(in) = a fatty acid(out)</text>
        <dbReference type="Rhea" id="RHEA:38879"/>
        <dbReference type="ChEBI" id="CHEBI:28868"/>
    </reaction>
    <physiologicalReaction direction="right-to-left" evidence="24 25">
        <dbReference type="Rhea" id="RHEA:38881"/>
    </physiologicalReaction>
</comment>
<comment type="catalytic activity">
    <molecule>Isoform 1</molecule>
    <reaction evidence="10">
        <text>(9Z)-octadecenoate(out) = (9Z)-octadecenoate(in)</text>
        <dbReference type="Rhea" id="RHEA:33655"/>
        <dbReference type="ChEBI" id="CHEBI:30823"/>
    </reaction>
</comment>
<comment type="catalytic activity">
    <molecule>Isoform 2</molecule>
    <reaction evidence="9">
        <text>a fatty acid(in) = a fatty acid(out)</text>
        <dbReference type="Rhea" id="RHEA:38879"/>
        <dbReference type="ChEBI" id="CHEBI:28868"/>
    </reaction>
    <physiologicalReaction direction="right-to-left" evidence="25">
        <dbReference type="Rhea" id="RHEA:38881"/>
    </physiologicalReaction>
</comment>
<comment type="catalytic activity">
    <molecule>Isoform 1</molecule>
    <reaction evidence="3 5 6 10 24">
        <text>a long-chain fatty acid + ATP + CoA = a long-chain fatty acyl-CoA + AMP + diphosphate</text>
        <dbReference type="Rhea" id="RHEA:15421"/>
        <dbReference type="ChEBI" id="CHEBI:30616"/>
        <dbReference type="ChEBI" id="CHEBI:33019"/>
        <dbReference type="ChEBI" id="CHEBI:57287"/>
        <dbReference type="ChEBI" id="CHEBI:57560"/>
        <dbReference type="ChEBI" id="CHEBI:83139"/>
        <dbReference type="ChEBI" id="CHEBI:456215"/>
        <dbReference type="EC" id="6.2.1.3"/>
    </reaction>
    <physiologicalReaction direction="left-to-right" evidence="21 22 23 24 26">
        <dbReference type="Rhea" id="RHEA:15422"/>
    </physiologicalReaction>
</comment>
<comment type="catalytic activity">
    <molecule>Isoform 1</molecule>
    <reaction evidence="1">
        <text>(5Z,8Z,11Z,14Z)-eicosatetraenoate + ATP + CoA = (5Z,8Z,11Z,14Z)-eicosatetraenoyl-CoA + AMP + diphosphate</text>
        <dbReference type="Rhea" id="RHEA:19713"/>
        <dbReference type="ChEBI" id="CHEBI:30616"/>
        <dbReference type="ChEBI" id="CHEBI:32395"/>
        <dbReference type="ChEBI" id="CHEBI:33019"/>
        <dbReference type="ChEBI" id="CHEBI:57287"/>
        <dbReference type="ChEBI" id="CHEBI:57368"/>
        <dbReference type="ChEBI" id="CHEBI:456215"/>
        <dbReference type="EC" id="6.2.1.15"/>
    </reaction>
    <physiologicalReaction direction="left-to-right" evidence="1">
        <dbReference type="Rhea" id="RHEA:19714"/>
    </physiologicalReaction>
</comment>
<comment type="catalytic activity">
    <molecule>Isoform 1</molecule>
    <reaction evidence="3 5 6 24">
        <text>hexadecanoate + ATP + CoA = hexadecanoyl-CoA + AMP + diphosphate</text>
        <dbReference type="Rhea" id="RHEA:30751"/>
        <dbReference type="ChEBI" id="CHEBI:7896"/>
        <dbReference type="ChEBI" id="CHEBI:30616"/>
        <dbReference type="ChEBI" id="CHEBI:33019"/>
        <dbReference type="ChEBI" id="CHEBI:57287"/>
        <dbReference type="ChEBI" id="CHEBI:57379"/>
        <dbReference type="ChEBI" id="CHEBI:456215"/>
    </reaction>
    <physiologicalReaction direction="left-to-right" evidence="21 22 23 24">
        <dbReference type="Rhea" id="RHEA:30752"/>
    </physiologicalReaction>
</comment>
<comment type="catalytic activity">
    <molecule>Isoform 1</molecule>
    <reaction evidence="10">
        <text>(9Z)-octadecenoate + ATP + CoA = (9Z)-octadecenoyl-CoA + AMP + diphosphate</text>
        <dbReference type="Rhea" id="RHEA:33607"/>
        <dbReference type="ChEBI" id="CHEBI:30616"/>
        <dbReference type="ChEBI" id="CHEBI:30823"/>
        <dbReference type="ChEBI" id="CHEBI:33019"/>
        <dbReference type="ChEBI" id="CHEBI:57287"/>
        <dbReference type="ChEBI" id="CHEBI:57387"/>
        <dbReference type="ChEBI" id="CHEBI:456215"/>
    </reaction>
    <physiologicalReaction direction="left-to-right" evidence="26">
        <dbReference type="Rhea" id="RHEA:33608"/>
    </physiologicalReaction>
</comment>
<comment type="catalytic activity">
    <molecule>Isoform 1</molecule>
    <reaction evidence="3">
        <text>3,7,11,15-tetramethylhexadecanoate + ATP + CoA = phytanoyl-CoA + AMP + diphosphate</text>
        <dbReference type="Rhea" id="RHEA:21380"/>
        <dbReference type="ChEBI" id="CHEBI:30616"/>
        <dbReference type="ChEBI" id="CHEBI:33019"/>
        <dbReference type="ChEBI" id="CHEBI:37257"/>
        <dbReference type="ChEBI" id="CHEBI:57287"/>
        <dbReference type="ChEBI" id="CHEBI:57391"/>
        <dbReference type="ChEBI" id="CHEBI:456215"/>
        <dbReference type="EC" id="6.2.1.24"/>
    </reaction>
    <physiologicalReaction direction="left-to-right" evidence="21">
        <dbReference type="Rhea" id="RHEA:21381"/>
    </physiologicalReaction>
</comment>
<comment type="catalytic activity">
    <molecule>Isoform 1</molecule>
    <reaction evidence="9">
        <text>(9Z,12Z,15Z)-octadecatrienoate + ATP + CoA = (9Z,12Z,15Z)-octadecatrienoyl-CoA + AMP + diphosphate</text>
        <dbReference type="Rhea" id="RHEA:44936"/>
        <dbReference type="ChEBI" id="CHEBI:30616"/>
        <dbReference type="ChEBI" id="CHEBI:32387"/>
        <dbReference type="ChEBI" id="CHEBI:33019"/>
        <dbReference type="ChEBI" id="CHEBI:57287"/>
        <dbReference type="ChEBI" id="CHEBI:74034"/>
        <dbReference type="ChEBI" id="CHEBI:456215"/>
    </reaction>
    <physiologicalReaction direction="left-to-right" evidence="25">
        <dbReference type="Rhea" id="RHEA:44937"/>
    </physiologicalReaction>
</comment>
<comment type="catalytic activity">
    <molecule>Isoform 1</molecule>
    <reaction evidence="3">
        <text>2,6,10,14-tetramethylpentadecanoate + ATP + CoA = pristanoyl-CoA + AMP + diphosphate</text>
        <dbReference type="Rhea" id="RHEA:47264"/>
        <dbReference type="ChEBI" id="CHEBI:30616"/>
        <dbReference type="ChEBI" id="CHEBI:33019"/>
        <dbReference type="ChEBI" id="CHEBI:57287"/>
        <dbReference type="ChEBI" id="CHEBI:77250"/>
        <dbReference type="ChEBI" id="CHEBI:77268"/>
        <dbReference type="ChEBI" id="CHEBI:456215"/>
    </reaction>
    <physiologicalReaction direction="left-to-right" evidence="21">
        <dbReference type="Rhea" id="RHEA:47265"/>
    </physiologicalReaction>
</comment>
<comment type="catalytic activity">
    <reaction evidence="11">
        <text>(E)-hexadec-2-enoate + ATP + CoA = (2E)-hexadecenoyl-CoA + AMP + diphosphate</text>
        <dbReference type="Rhea" id="RHEA:36139"/>
        <dbReference type="ChEBI" id="CHEBI:30616"/>
        <dbReference type="ChEBI" id="CHEBI:33019"/>
        <dbReference type="ChEBI" id="CHEBI:57287"/>
        <dbReference type="ChEBI" id="CHEBI:61526"/>
        <dbReference type="ChEBI" id="CHEBI:72745"/>
        <dbReference type="ChEBI" id="CHEBI:456215"/>
    </reaction>
    <physiologicalReaction direction="left-to-right" evidence="27">
        <dbReference type="Rhea" id="RHEA:36140"/>
    </physiologicalReaction>
</comment>
<comment type="catalytic activity">
    <molecule>Isoform 1</molecule>
    <reaction evidence="3 5 6 9 24">
        <text>a very long-chain fatty acid + ATP + CoA = a very long-chain fatty acyl-CoA + AMP + diphosphate</text>
        <dbReference type="Rhea" id="RHEA:54536"/>
        <dbReference type="ChEBI" id="CHEBI:30616"/>
        <dbReference type="ChEBI" id="CHEBI:33019"/>
        <dbReference type="ChEBI" id="CHEBI:57287"/>
        <dbReference type="ChEBI" id="CHEBI:58950"/>
        <dbReference type="ChEBI" id="CHEBI:138261"/>
        <dbReference type="ChEBI" id="CHEBI:456215"/>
    </reaction>
    <physiologicalReaction direction="left-to-right" evidence="21 22 23 24">
        <dbReference type="Rhea" id="RHEA:54537"/>
    </physiologicalReaction>
</comment>
<comment type="catalytic activity">
    <molecule>Isoform 1</molecule>
    <reaction evidence="3 5 9 24">
        <text>tetracosanoate + ATP + CoA = tetracosanoyl-CoA + AMP + diphosphate</text>
        <dbReference type="Rhea" id="RHEA:33639"/>
        <dbReference type="ChEBI" id="CHEBI:30616"/>
        <dbReference type="ChEBI" id="CHEBI:31014"/>
        <dbReference type="ChEBI" id="CHEBI:33019"/>
        <dbReference type="ChEBI" id="CHEBI:57287"/>
        <dbReference type="ChEBI" id="CHEBI:65052"/>
        <dbReference type="ChEBI" id="CHEBI:456215"/>
    </reaction>
    <physiologicalReaction direction="left-to-right" evidence="21 22 24 25">
        <dbReference type="Rhea" id="RHEA:33640"/>
    </physiologicalReaction>
</comment>
<comment type="catalytic activity">
    <molecule>Isoform 1</molecule>
    <reaction evidence="9">
        <text>(4Z,7Z,10Z,13Z,16Z,19Z)-docosahexaenoate + ATP + CoA = (4Z,7Z,10Z,13Z,16Z,19Z)-docosahexaenoyl-CoA + AMP + diphosphate</text>
        <dbReference type="Rhea" id="RHEA:44932"/>
        <dbReference type="ChEBI" id="CHEBI:30616"/>
        <dbReference type="ChEBI" id="CHEBI:33019"/>
        <dbReference type="ChEBI" id="CHEBI:57287"/>
        <dbReference type="ChEBI" id="CHEBI:74298"/>
        <dbReference type="ChEBI" id="CHEBI:77016"/>
        <dbReference type="ChEBI" id="CHEBI:456215"/>
    </reaction>
    <physiologicalReaction direction="left-to-right" evidence="25">
        <dbReference type="Rhea" id="RHEA:44933"/>
    </physiologicalReaction>
</comment>
<comment type="catalytic activity">
    <molecule>Isoform 1</molecule>
    <reaction evidence="6">
        <text>(25R)-3alpha,7alpha,12alpha-trihydroxy-5beta-cholestan-26-oate + ATP + CoA = (25R)-3alpha,7alpha,12alpha-trihydroxy-5beta-cholestan-26-oyl-CoA + AMP + diphosphate</text>
        <dbReference type="Rhea" id="RHEA:22976"/>
        <dbReference type="ChEBI" id="CHEBI:30616"/>
        <dbReference type="ChEBI" id="CHEBI:33019"/>
        <dbReference type="ChEBI" id="CHEBI:57287"/>
        <dbReference type="ChEBI" id="CHEBI:58677"/>
        <dbReference type="ChEBI" id="CHEBI:58734"/>
        <dbReference type="ChEBI" id="CHEBI:456215"/>
        <dbReference type="EC" id="6.2.1.7"/>
    </reaction>
    <physiologicalReaction direction="left-to-right" evidence="23">
        <dbReference type="Rhea" id="RHEA:22977"/>
    </physiologicalReaction>
</comment>
<comment type="biophysicochemical properties">
    <kinetics>
        <KM evidence="6">12 uM for hexadecanoate (palmitate)</KM>
        <Vmax evidence="6">1.4 nmol/min/mg enzyme for hexadecanoyl-CoA (palmitoyl-CoA) synthesis</Vmax>
    </kinetics>
</comment>
<comment type="subcellular location">
    <subcellularLocation>
        <location evidence="6 10 11">Endoplasmic reticulum membrane</location>
        <topology evidence="2">Multi-pass membrane protein</topology>
    </subcellularLocation>
    <subcellularLocation>
        <location evidence="3 4">Peroxisome membrane</location>
        <topology evidence="4">Peripheral membrane protein</topology>
    </subcellularLocation>
    <subcellularLocation>
        <location evidence="8">Cell membrane</location>
        <topology evidence="2">Multi-pass membrane protein</topology>
    </subcellularLocation>
    <subcellularLocation>
        <location evidence="4">Microsome</location>
    </subcellularLocation>
</comment>
<comment type="alternative products">
    <event type="alternative splicing"/>
    <isoform>
        <id>O14975-1</id>
        <name>1</name>
        <name evidence="19">FATP2a</name>
        <sequence type="displayed"/>
    </isoform>
    <isoform>
        <id>O14975-2</id>
        <name>2</name>
        <name evidence="19">FATP2b</name>
        <sequence type="described" ref="VSP_042726"/>
    </isoform>
</comment>
<comment type="tissue specificity">
    <molecule>Isoform 1</molecule>
    <text evidence="3 8 9 11">Expressed in liver, kidney, placenta, intestine, brain, heart, and colon (PubMed:10198260, PubMed:21768100, PubMed:24269233). Predominantly expressed in liver (PubMed:20530735).</text>
</comment>
<comment type="tissue specificity">
    <molecule>Isoform 2</molecule>
    <text evidence="9">Expressed in liver, placenta, and intestine, but much lower relative to isoform 1.</text>
</comment>
<comment type="similarity">
    <text evidence="20">Belongs to the ATP-dependent AMP-binding enzyme family.</text>
</comment>
<keyword id="KW-0007">Acetylation</keyword>
<keyword id="KW-0025">Alternative splicing</keyword>
<keyword id="KW-0067">ATP-binding</keyword>
<keyword id="KW-1003">Cell membrane</keyword>
<keyword id="KW-0256">Endoplasmic reticulum</keyword>
<keyword id="KW-0276">Fatty acid metabolism</keyword>
<keyword id="KW-0436">Ligase</keyword>
<keyword id="KW-0443">Lipid metabolism</keyword>
<keyword id="KW-0445">Lipid transport</keyword>
<keyword id="KW-0472">Membrane</keyword>
<keyword id="KW-0492">Microsome</keyword>
<keyword id="KW-0547">Nucleotide-binding</keyword>
<keyword id="KW-0576">Peroxisome</keyword>
<keyword id="KW-0597">Phosphoprotein</keyword>
<keyword id="KW-1267">Proteomics identification</keyword>
<keyword id="KW-1185">Reference proteome</keyword>
<keyword id="KW-0812">Transmembrane</keyword>
<keyword id="KW-1133">Transmembrane helix</keyword>
<keyword id="KW-0813">Transport</keyword>
<name>S27A2_HUMAN</name>
<gene>
    <name type="primary">SLC27A2</name>
    <name type="synonym">ACSVL1</name>
    <name type="synonym">FACVL1</name>
    <name type="synonym">FATP2</name>
    <name type="synonym">VLACS</name>
</gene>
<dbReference type="EC" id="6.2.1.15" evidence="1"/>
<dbReference type="EC" id="6.2.1.3" evidence="3 5 6"/>
<dbReference type="EC" id="6.2.1.24" evidence="3"/>
<dbReference type="EC" id="6.2.1.7" evidence="6"/>
<dbReference type="EC" id="6.2.1.-" evidence="3 5 6 9"/>
<dbReference type="EMBL" id="D88308">
    <property type="protein sequence ID" value="BAA23644.1"/>
    <property type="molecule type" value="mRNA"/>
</dbReference>
<dbReference type="EMBL" id="AF096290">
    <property type="protein sequence ID" value="AAC64973.1"/>
    <property type="molecule type" value="mRNA"/>
</dbReference>
<dbReference type="EMBL" id="AK223145">
    <property type="protein sequence ID" value="BAD96865.1"/>
    <property type="molecule type" value="mRNA"/>
</dbReference>
<dbReference type="EMBL" id="AK290262">
    <property type="protein sequence ID" value="BAF82951.1"/>
    <property type="molecule type" value="mRNA"/>
</dbReference>
<dbReference type="EMBL" id="AC009753">
    <property type="status" value="NOT_ANNOTATED_CDS"/>
    <property type="molecule type" value="Genomic_DNA"/>
</dbReference>
<dbReference type="EMBL" id="CH471082">
    <property type="protein sequence ID" value="EAW77386.1"/>
    <property type="molecule type" value="Genomic_DNA"/>
</dbReference>
<dbReference type="EMBL" id="BC057770">
    <property type="protein sequence ID" value="AAH57770.1"/>
    <property type="molecule type" value="mRNA"/>
</dbReference>
<dbReference type="CCDS" id="CCDS10133.1">
    <molecule id="O14975-1"/>
</dbReference>
<dbReference type="CCDS" id="CCDS53943.1">
    <molecule id="O14975-2"/>
</dbReference>
<dbReference type="RefSeq" id="NP_001153101.1">
    <molecule id="O14975-2"/>
    <property type="nucleotide sequence ID" value="NM_001159629.2"/>
</dbReference>
<dbReference type="RefSeq" id="NP_003636.2">
    <molecule id="O14975-1"/>
    <property type="nucleotide sequence ID" value="NM_003645.4"/>
</dbReference>
<dbReference type="SMR" id="O14975"/>
<dbReference type="BioGRID" id="116194">
    <property type="interactions" value="174"/>
</dbReference>
<dbReference type="FunCoup" id="O14975">
    <property type="interactions" value="839"/>
</dbReference>
<dbReference type="IntAct" id="O14975">
    <property type="interactions" value="84"/>
</dbReference>
<dbReference type="MINT" id="O14975"/>
<dbReference type="STRING" id="9606.ENSP00000267842"/>
<dbReference type="BindingDB" id="O14975"/>
<dbReference type="ChEMBL" id="CHEMBL4326"/>
<dbReference type="DrugBank" id="DB11936">
    <property type="generic name" value="Bempedoic acid"/>
</dbReference>
<dbReference type="SwissLipids" id="SLP:000000428"/>
<dbReference type="SwissLipids" id="SLP:000000431">
    <molecule id="O14975-2"/>
</dbReference>
<dbReference type="SwissLipids" id="SLP:000000432">
    <molecule id="O14975-1"/>
</dbReference>
<dbReference type="TCDB" id="4.C.1.1.5">
    <property type="family name" value="the fatty acid group translocation (fat) family"/>
</dbReference>
<dbReference type="GlyCosmos" id="O14975">
    <property type="glycosylation" value="2 sites, 1 glycan"/>
</dbReference>
<dbReference type="GlyGen" id="O14975">
    <property type="glycosylation" value="2 sites, 1 O-linked glycan (2 sites)"/>
</dbReference>
<dbReference type="iPTMnet" id="O14975"/>
<dbReference type="MetOSite" id="O14975"/>
<dbReference type="PhosphoSitePlus" id="O14975"/>
<dbReference type="SwissPalm" id="O14975"/>
<dbReference type="BioMuta" id="SLC27A2"/>
<dbReference type="jPOST" id="O14975"/>
<dbReference type="MassIVE" id="O14975"/>
<dbReference type="PaxDb" id="9606-ENSP00000267842"/>
<dbReference type="PeptideAtlas" id="O14975"/>
<dbReference type="ProteomicsDB" id="48348">
    <molecule id="O14975-1"/>
</dbReference>
<dbReference type="ProteomicsDB" id="48349">
    <molecule id="O14975-2"/>
</dbReference>
<dbReference type="Pumba" id="O14975"/>
<dbReference type="Antibodypedia" id="12170">
    <property type="antibodies" value="194 antibodies from 28 providers"/>
</dbReference>
<dbReference type="DNASU" id="11001"/>
<dbReference type="Ensembl" id="ENST00000267842.10">
    <molecule id="O14975-1"/>
    <property type="protein sequence ID" value="ENSP00000267842.5"/>
    <property type="gene ID" value="ENSG00000140284.11"/>
</dbReference>
<dbReference type="Ensembl" id="ENST00000380902.8">
    <molecule id="O14975-2"/>
    <property type="protein sequence ID" value="ENSP00000370289.4"/>
    <property type="gene ID" value="ENSG00000140284.11"/>
</dbReference>
<dbReference type="GeneID" id="11001"/>
<dbReference type="KEGG" id="hsa:11001"/>
<dbReference type="MANE-Select" id="ENST00000267842.10">
    <property type="protein sequence ID" value="ENSP00000267842.5"/>
    <property type="RefSeq nucleotide sequence ID" value="NM_003645.4"/>
    <property type="RefSeq protein sequence ID" value="NP_003636.2"/>
</dbReference>
<dbReference type="UCSC" id="uc001zxw.4">
    <molecule id="O14975-1"/>
    <property type="organism name" value="human"/>
</dbReference>
<dbReference type="AGR" id="HGNC:10996"/>
<dbReference type="CTD" id="11001"/>
<dbReference type="DisGeNET" id="11001"/>
<dbReference type="GeneCards" id="SLC27A2"/>
<dbReference type="HGNC" id="HGNC:10996">
    <property type="gene designation" value="SLC27A2"/>
</dbReference>
<dbReference type="HPA" id="ENSG00000140284">
    <property type="expression patterns" value="Tissue enhanced (kidney, liver)"/>
</dbReference>
<dbReference type="MIM" id="603247">
    <property type="type" value="gene"/>
</dbReference>
<dbReference type="neXtProt" id="NX_O14975"/>
<dbReference type="OpenTargets" id="ENSG00000140284"/>
<dbReference type="PharmGKB" id="PA27971"/>
<dbReference type="VEuPathDB" id="HostDB:ENSG00000140284"/>
<dbReference type="eggNOG" id="KOG1179">
    <property type="taxonomic scope" value="Eukaryota"/>
</dbReference>
<dbReference type="GeneTree" id="ENSGT00940000161137"/>
<dbReference type="HOGENOM" id="CLU_000022_46_2_1"/>
<dbReference type="InParanoid" id="O14975"/>
<dbReference type="OMA" id="IIHELYA"/>
<dbReference type="OrthoDB" id="288590at2759"/>
<dbReference type="PAN-GO" id="O14975">
    <property type="GO annotations" value="13 GO annotations based on evolutionary models"/>
</dbReference>
<dbReference type="PhylomeDB" id="O14975"/>
<dbReference type="TreeFam" id="TF313430"/>
<dbReference type="BioCyc" id="MetaCyc:HS06695-MONOMER"/>
<dbReference type="PathwayCommons" id="O14975"/>
<dbReference type="Reactome" id="R-HSA-193368">
    <property type="pathway name" value="Synthesis of bile acids and bile salts via 7alpha-hydroxycholesterol"/>
</dbReference>
<dbReference type="Reactome" id="R-HSA-193775">
    <property type="pathway name" value="Synthesis of bile acids and bile salts via 24-hydroxycholesterol"/>
</dbReference>
<dbReference type="Reactome" id="R-HSA-389599">
    <property type="pathway name" value="Alpha-oxidation of phytanate"/>
</dbReference>
<dbReference type="Reactome" id="R-HSA-390247">
    <property type="pathway name" value="Beta-oxidation of very long chain fatty acids"/>
</dbReference>
<dbReference type="Reactome" id="R-HSA-6798695">
    <property type="pathway name" value="Neutrophil degranulation"/>
</dbReference>
<dbReference type="Reactome" id="R-HSA-75105">
    <property type="pathway name" value="Fatty acyl-CoA biosynthesis"/>
</dbReference>
<dbReference type="Reactome" id="R-HSA-9033241">
    <property type="pathway name" value="Peroxisomal protein import"/>
</dbReference>
<dbReference type="SignaLink" id="O14975"/>
<dbReference type="SIGNOR" id="O14975"/>
<dbReference type="BioGRID-ORCS" id="11001">
    <property type="hits" value="12 hits in 1161 CRISPR screens"/>
</dbReference>
<dbReference type="ChiTaRS" id="SLC27A2">
    <property type="organism name" value="human"/>
</dbReference>
<dbReference type="GeneWiki" id="SLC27A2"/>
<dbReference type="GenomeRNAi" id="11001"/>
<dbReference type="Pharos" id="O14975">
    <property type="development level" value="Tbio"/>
</dbReference>
<dbReference type="PRO" id="PR:O14975"/>
<dbReference type="Proteomes" id="UP000005640">
    <property type="component" value="Chromosome 15"/>
</dbReference>
<dbReference type="RNAct" id="O14975">
    <property type="molecule type" value="protein"/>
</dbReference>
<dbReference type="Bgee" id="ENSG00000140284">
    <property type="expression patterns" value="Expressed in bronchial epithelial cell and 162 other cell types or tissues"/>
</dbReference>
<dbReference type="ExpressionAtlas" id="O14975">
    <property type="expression patterns" value="baseline and differential"/>
</dbReference>
<dbReference type="GO" id="GO:0005829">
    <property type="term" value="C:cytosol"/>
    <property type="evidence" value="ECO:0000304"/>
    <property type="project" value="Reactome"/>
</dbReference>
<dbReference type="GO" id="GO:0005788">
    <property type="term" value="C:endoplasmic reticulum lumen"/>
    <property type="evidence" value="ECO:0000314"/>
    <property type="project" value="UniProtKB"/>
</dbReference>
<dbReference type="GO" id="GO:0005789">
    <property type="term" value="C:endoplasmic reticulum membrane"/>
    <property type="evidence" value="ECO:0000314"/>
    <property type="project" value="UniProtKB"/>
</dbReference>
<dbReference type="GO" id="GO:0070062">
    <property type="term" value="C:extracellular exosome"/>
    <property type="evidence" value="ECO:0007005"/>
    <property type="project" value="UniProtKB"/>
</dbReference>
<dbReference type="GO" id="GO:0005778">
    <property type="term" value="C:peroxisomal membrane"/>
    <property type="evidence" value="ECO:0000314"/>
    <property type="project" value="UniProtKB"/>
</dbReference>
<dbReference type="GO" id="GO:0005886">
    <property type="term" value="C:plasma membrane"/>
    <property type="evidence" value="ECO:0000318"/>
    <property type="project" value="GO_Central"/>
</dbReference>
<dbReference type="GO" id="GO:0035579">
    <property type="term" value="C:specific granule membrane"/>
    <property type="evidence" value="ECO:0000304"/>
    <property type="project" value="Reactome"/>
</dbReference>
<dbReference type="GO" id="GO:0047676">
    <property type="term" value="F:arachidonate-CoA ligase activity"/>
    <property type="evidence" value="ECO:0007669"/>
    <property type="project" value="UniProtKB-EC"/>
</dbReference>
<dbReference type="GO" id="GO:0005524">
    <property type="term" value="F:ATP binding"/>
    <property type="evidence" value="ECO:0007669"/>
    <property type="project" value="UniProtKB-KW"/>
</dbReference>
<dbReference type="GO" id="GO:0047747">
    <property type="term" value="F:cholate-CoA ligase activity"/>
    <property type="evidence" value="ECO:0007669"/>
    <property type="project" value="UniProtKB-EC"/>
</dbReference>
<dbReference type="GO" id="GO:0019899">
    <property type="term" value="F:enzyme binding"/>
    <property type="evidence" value="ECO:0000353"/>
    <property type="project" value="UniProtKB"/>
</dbReference>
<dbReference type="GO" id="GO:0005324">
    <property type="term" value="F:long-chain fatty acid transmembrane transporter activity"/>
    <property type="evidence" value="ECO:0000314"/>
    <property type="project" value="UniProtKB"/>
</dbReference>
<dbReference type="GO" id="GO:0004467">
    <property type="term" value="F:long-chain fatty acid-CoA ligase activity"/>
    <property type="evidence" value="ECO:0000314"/>
    <property type="project" value="UniProtKB"/>
</dbReference>
<dbReference type="GO" id="GO:0050197">
    <property type="term" value="F:phytanate-CoA ligase activity"/>
    <property type="evidence" value="ECO:0000314"/>
    <property type="project" value="UniProtKB"/>
</dbReference>
<dbReference type="GO" id="GO:0070251">
    <property type="term" value="F:pristanate-CoA ligase activity"/>
    <property type="evidence" value="ECO:0000314"/>
    <property type="project" value="UniProtKB"/>
</dbReference>
<dbReference type="GO" id="GO:0031957">
    <property type="term" value="F:very long-chain fatty acid-CoA ligase activity"/>
    <property type="evidence" value="ECO:0000314"/>
    <property type="project" value="UniProtKB"/>
</dbReference>
<dbReference type="GO" id="GO:0006699">
    <property type="term" value="P:bile acid biosynthetic process"/>
    <property type="evidence" value="ECO:0000314"/>
    <property type="project" value="UniProtKB"/>
</dbReference>
<dbReference type="GO" id="GO:0008206">
    <property type="term" value="P:bile acid metabolic process"/>
    <property type="evidence" value="ECO:0000318"/>
    <property type="project" value="GO_Central"/>
</dbReference>
<dbReference type="GO" id="GO:0001561">
    <property type="term" value="P:fatty acid alpha-oxidation"/>
    <property type="evidence" value="ECO:0000314"/>
    <property type="project" value="UniProtKB"/>
</dbReference>
<dbReference type="GO" id="GO:0006635">
    <property type="term" value="P:fatty acid beta-oxidation"/>
    <property type="evidence" value="ECO:0000314"/>
    <property type="project" value="UniProtKB"/>
</dbReference>
<dbReference type="GO" id="GO:0033540">
    <property type="term" value="P:fatty acid beta-oxidation using acyl-CoA oxidase"/>
    <property type="evidence" value="ECO:0000304"/>
    <property type="project" value="Reactome"/>
</dbReference>
<dbReference type="GO" id="GO:0046949">
    <property type="term" value="P:fatty-acyl-CoA biosynthetic process"/>
    <property type="evidence" value="ECO:0000304"/>
    <property type="project" value="Reactome"/>
</dbReference>
<dbReference type="GO" id="GO:0044539">
    <property type="term" value="P:long-chain fatty acid import into cell"/>
    <property type="evidence" value="ECO:0000314"/>
    <property type="project" value="UniProtKB"/>
</dbReference>
<dbReference type="GO" id="GO:0001676">
    <property type="term" value="P:long-chain fatty acid metabolic process"/>
    <property type="evidence" value="ECO:0000314"/>
    <property type="project" value="UniProtKB"/>
</dbReference>
<dbReference type="GO" id="GO:0097089">
    <property type="term" value="P:methyl-branched fatty acid metabolic process"/>
    <property type="evidence" value="ECO:0000314"/>
    <property type="project" value="UniProtKB"/>
</dbReference>
<dbReference type="GO" id="GO:0042760">
    <property type="term" value="P:very long-chain fatty acid catabolic process"/>
    <property type="evidence" value="ECO:0007669"/>
    <property type="project" value="Ensembl"/>
</dbReference>
<dbReference type="CDD" id="cd05938">
    <property type="entry name" value="hsFATP2a_ACSVL_like"/>
    <property type="match status" value="1"/>
</dbReference>
<dbReference type="FunFam" id="3.30.300.30:FF:000002">
    <property type="entry name" value="Long-chain fatty acid transport protein 1"/>
    <property type="match status" value="1"/>
</dbReference>
<dbReference type="FunFam" id="3.40.50.12780:FF:000005">
    <property type="entry name" value="Solute carrier family 27 member 6"/>
    <property type="match status" value="1"/>
</dbReference>
<dbReference type="Gene3D" id="3.30.300.30">
    <property type="match status" value="1"/>
</dbReference>
<dbReference type="Gene3D" id="3.40.50.12780">
    <property type="entry name" value="N-terminal domain of ligase-like"/>
    <property type="match status" value="1"/>
</dbReference>
<dbReference type="InterPro" id="IPR025110">
    <property type="entry name" value="AMP-bd_C"/>
</dbReference>
<dbReference type="InterPro" id="IPR045851">
    <property type="entry name" value="AMP-bd_C_sf"/>
</dbReference>
<dbReference type="InterPro" id="IPR020845">
    <property type="entry name" value="AMP-binding_CS"/>
</dbReference>
<dbReference type="InterPro" id="IPR000873">
    <property type="entry name" value="AMP-dep_synth/lig_dom"/>
</dbReference>
<dbReference type="InterPro" id="IPR042099">
    <property type="entry name" value="ANL_N_sf"/>
</dbReference>
<dbReference type="NCBIfam" id="NF006134">
    <property type="entry name" value="PRK08279.1"/>
    <property type="match status" value="1"/>
</dbReference>
<dbReference type="PANTHER" id="PTHR43107">
    <property type="entry name" value="LONG-CHAIN FATTY ACID TRANSPORT PROTEIN"/>
    <property type="match status" value="1"/>
</dbReference>
<dbReference type="PANTHER" id="PTHR43107:SF4">
    <property type="entry name" value="LONG-CHAIN FATTY ACID TRANSPORT PROTEIN 2"/>
    <property type="match status" value="1"/>
</dbReference>
<dbReference type="Pfam" id="PF00501">
    <property type="entry name" value="AMP-binding"/>
    <property type="match status" value="1"/>
</dbReference>
<dbReference type="Pfam" id="PF13193">
    <property type="entry name" value="AMP-binding_C"/>
    <property type="match status" value="1"/>
</dbReference>
<dbReference type="SUPFAM" id="SSF56801">
    <property type="entry name" value="Acetyl-CoA synthetase-like"/>
    <property type="match status" value="1"/>
</dbReference>
<dbReference type="PROSITE" id="PS00455">
    <property type="entry name" value="AMP_BINDING"/>
    <property type="match status" value="1"/>
</dbReference>